<protein>
    <recommendedName>
        <fullName>Actin</fullName>
    </recommendedName>
    <alternativeName>
        <fullName>Water stress-responsive protein 5</fullName>
    </alternativeName>
</protein>
<sequence length="15" mass="1574">DLYGNIVLSGGSTMF</sequence>
<dbReference type="GO" id="GO:0005737">
    <property type="term" value="C:cytoplasm"/>
    <property type="evidence" value="ECO:0007669"/>
    <property type="project" value="UniProtKB-KW"/>
</dbReference>
<dbReference type="GO" id="GO:0005856">
    <property type="term" value="C:cytoskeleton"/>
    <property type="evidence" value="ECO:0007669"/>
    <property type="project" value="UniProtKB-SubCell"/>
</dbReference>
<dbReference type="GO" id="GO:0005524">
    <property type="term" value="F:ATP binding"/>
    <property type="evidence" value="ECO:0007669"/>
    <property type="project" value="UniProtKB-KW"/>
</dbReference>
<dbReference type="Gene3D" id="3.30.420.40">
    <property type="match status" value="1"/>
</dbReference>
<proteinExistence type="evidence at protein level"/>
<reference key="1">
    <citation type="journal article" date="1998" name="Plant Mol. Biol.">
        <title>Water-deficit-responsive proteins in maritime pine.</title>
        <authorList>
            <person name="Costa P."/>
            <person name="Bahrman N."/>
            <person name="Frigerio J.-M."/>
            <person name="Kremer A."/>
            <person name="Plomion C."/>
        </authorList>
    </citation>
    <scope>PROTEIN SEQUENCE</scope>
    <source>
        <tissue>Needle</tissue>
    </source>
</reference>
<reference key="2">
    <citation type="journal article" date="1999" name="Electrophoresis">
        <title>Separation and characterization of needle and xylem maritime pine proteins.</title>
        <authorList>
            <person name="Costa P."/>
            <person name="Pionneau C."/>
            <person name="Bauw G."/>
            <person name="Dubos C."/>
            <person name="Bahrman N."/>
            <person name="Kremer A."/>
            <person name="Frigerio J.-M."/>
            <person name="Plomion C."/>
        </authorList>
    </citation>
    <scope>PROTEIN SEQUENCE</scope>
    <source>
        <tissue>Needle</tissue>
    </source>
</reference>
<keyword id="KW-0067">ATP-binding</keyword>
<keyword id="KW-0963">Cytoplasm</keyword>
<keyword id="KW-0206">Cytoskeleton</keyword>
<keyword id="KW-0903">Direct protein sequencing</keyword>
<keyword id="KW-0547">Nucleotide-binding</keyword>
<keyword id="KW-0346">Stress response</keyword>
<accession>P81085</accession>
<organism>
    <name type="scientific">Pinus pinaster</name>
    <name type="common">Maritime pine</name>
    <dbReference type="NCBI Taxonomy" id="71647"/>
    <lineage>
        <taxon>Eukaryota</taxon>
        <taxon>Viridiplantae</taxon>
        <taxon>Streptophyta</taxon>
        <taxon>Embryophyta</taxon>
        <taxon>Tracheophyta</taxon>
        <taxon>Spermatophyta</taxon>
        <taxon>Pinopsida</taxon>
        <taxon>Pinidae</taxon>
        <taxon>Conifers I</taxon>
        <taxon>Pinales</taxon>
        <taxon>Pinaceae</taxon>
        <taxon>Pinus</taxon>
        <taxon>Pinus subgen. Pinus</taxon>
    </lineage>
</organism>
<name>ACT_PINPS</name>
<feature type="chain" id="PRO_0000088993" description="Actin">
    <location>
        <begin position="1" status="less than"/>
        <end position="15" status="greater than"/>
    </location>
</feature>
<feature type="non-terminal residue">
    <location>
        <position position="1"/>
    </location>
</feature>
<feature type="non-terminal residue">
    <location>
        <position position="15"/>
    </location>
</feature>
<comment type="function">
    <text evidence="1">Actins are highly conserved proteins that are involved in various types of cell motility and are ubiquitously expressed in all eukaryotic cells.</text>
</comment>
<comment type="subcellular location">
    <subcellularLocation>
        <location evidence="1">Cytoplasm</location>
        <location evidence="1">Cytoskeleton</location>
    </subcellularLocation>
</comment>
<comment type="induction">
    <text>By water stress.</text>
</comment>
<comment type="similarity">
    <text evidence="2">Belongs to the actin family.</text>
</comment>
<evidence type="ECO:0000250" key="1"/>
<evidence type="ECO:0000305" key="2"/>